<accession>O42814</accession>
<comment type="function">
    <text evidence="2 3">Alpha-glucuronidase involved in the hydrolysis of xylan, a major structural heterogeneous polysaccharide found in plant biomass representing the second most abundant polysaccharide in the biosphere, after cellulose. Releases 4-O-methylglucuronic acid from xylan.</text>
</comment>
<comment type="catalytic activity">
    <reaction>
        <text>an alpha-D-glucuronoside + H2O = D-glucuronate + an alcohol</text>
        <dbReference type="Rhea" id="RHEA:20005"/>
        <dbReference type="ChEBI" id="CHEBI:15377"/>
        <dbReference type="ChEBI" id="CHEBI:30879"/>
        <dbReference type="ChEBI" id="CHEBI:58720"/>
        <dbReference type="ChEBI" id="CHEBI:58899"/>
        <dbReference type="EC" id="3.2.1.139"/>
    </reaction>
</comment>
<comment type="biophysicochemical properties">
    <phDependence>
        <text evidence="3">Optimum pH is 4.5-6.0.</text>
    </phDependence>
    <temperatureDependence>
        <text evidence="3">Optimum temperature is 70 degrees Celsius.</text>
    </temperatureDependence>
</comment>
<comment type="subcellular location">
    <subcellularLocation>
        <location>Secreted</location>
    </subcellularLocation>
</comment>
<comment type="induction">
    <text evidence="3">By xylan and xylose but not by glucuronic acid.</text>
</comment>
<comment type="similarity">
    <text evidence="4">Belongs to the glycosyl hydrolase 67 family.</text>
</comment>
<sequence length="841" mass="93904">MRGSNLFQLTLALLLSLVAAEDGYNGWLRYAPVSCDLHCRQALPSHIVLLNSTKGSPIETAGRELKAGFQSILSTNLTFHPFQCDSSASILVATLDEYRQKCRDINLPELDPDGFWLQSEGDTVRILGNNARGALYGAYEYLAMVAQRNFSRVAYTTNPHAPIRWVNQWDNMDGSIERGYGGASIFFKDGTVVEDMAPVEQYARLLASIRINAIVVNNVNANATLLLPENMKGLGRIADACRPYGVQIGISLNFASPESLGGLETYDPLDPGVIAWWQNITDSLYTYVPDMAGYLVKADSEGQPGPDTYNRTLSQGANLFARALQPHGGVLMYRAFVYNDNLNESDWKADRAKAAVEYFKDLDGQFYENVVVQIKYGPIDFQVREPTSPLFANLYQTNTAIELEVSQEYLGQQCHLVYLPPLWKTVLDFDLRVDHKPSMVRDILSGQRFNRTLGGWAAVVNVGTNRTWLGSHLAMSNLYAYGRLAWSPTDDSEQILKDWTRLTFGQNRQVIDTIADMPMTSWPAYENYTGNLGIQTLTDILYTHYGPNPATQDNNGWGQWTRADHNSVGMDRTISNGTGYTGQYPEEVARLYESLETTPDDLVLWFHHVPWTHRLHSGLTVIQHFYNAHYAGSEAAHGFIRQWESLKGLIDRERYEAMRSRLVYQAGHSIVWRDAINNFYYNMTGIPDVAGRVGHHPWRIEAESMRLDGYQTYTVSPFEAASNTTAIITTSNSTTGTARTTIKAPSGVYDIGVNYYDLYGGQSKWTLSVGDKVVGQWLGDMEHQSLGHTPSIYLDGHSATRITFHGVVVRQGDQLKIVGEANGVEPAPVDYVVLLPPGVVD</sequence>
<gene>
    <name type="primary">aguA</name>
</gene>
<keyword id="KW-0119">Carbohydrate metabolism</keyword>
<keyword id="KW-0325">Glycoprotein</keyword>
<keyword id="KW-0326">Glycosidase</keyword>
<keyword id="KW-0378">Hydrolase</keyword>
<keyword id="KW-0624">Polysaccharide degradation</keyword>
<keyword id="KW-0964">Secreted</keyword>
<keyword id="KW-0732">Signal</keyword>
<keyword id="KW-0858">Xylan degradation</keyword>
<protein>
    <recommendedName>
        <fullName>Alpha-glucuronidase A</fullName>
        <ecNumber>3.2.1.139</ecNumber>
    </recommendedName>
    <alternativeName>
        <fullName>Alpha-glucosiduronase A</fullName>
    </alternativeName>
</protein>
<name>AGUA_ASPTU</name>
<reference key="1">
    <citation type="journal article" date="1998" name="J. Bacteriol.">
        <title>AguA, the gene encoding an extracellular alpha-glucuronidase from Aspergillus tubingensis, is specifically induced on xylose and not on glucuronic acid.</title>
        <authorList>
            <person name="de Vries R.P."/>
            <person name="Poulsen C.H."/>
            <person name="Madrid S."/>
            <person name="Visser J."/>
        </authorList>
    </citation>
    <scope>NUCLEOTIDE SEQUENCE [GENOMIC DNA]</scope>
    <scope>INDUCTION</scope>
    <scope>FUNCTION</scope>
    <scope>BIOPHYSICOCHEMICAL PROPERTIES</scope>
    <source>
        <strain>NW756</strain>
    </source>
</reference>
<reference key="2">
    <citation type="journal article" date="2000" name="Biochim. Biophys. Acta">
        <title>Inverting character of alpha-glucuronidase A from Aspergillus tubingensis.</title>
        <authorList>
            <person name="Biely P."/>
            <person name="de Vries R.P."/>
            <person name="Vrsanska M."/>
            <person name="Visser J."/>
        </authorList>
    </citation>
    <scope>FUNCTION</scope>
</reference>
<evidence type="ECO:0000255" key="1"/>
<evidence type="ECO:0000269" key="2">
    <source>
    </source>
</evidence>
<evidence type="ECO:0000269" key="3">
    <source>
    </source>
</evidence>
<evidence type="ECO:0000305" key="4"/>
<feature type="signal peptide" evidence="1">
    <location>
        <begin position="1"/>
        <end position="20"/>
    </location>
</feature>
<feature type="chain" id="PRO_0000012243" description="Alpha-glucuronidase A">
    <location>
        <begin position="21"/>
        <end position="841"/>
    </location>
</feature>
<feature type="glycosylation site" description="N-linked (GlcNAc...) asparagine" evidence="1">
    <location>
        <position position="51"/>
    </location>
</feature>
<feature type="glycosylation site" description="N-linked (GlcNAc...) asparagine" evidence="1">
    <location>
        <position position="76"/>
    </location>
</feature>
<feature type="glycosylation site" description="N-linked (GlcNAc...) asparagine" evidence="1">
    <location>
        <position position="149"/>
    </location>
</feature>
<feature type="glycosylation site" description="N-linked (GlcNAc...) asparagine" evidence="1">
    <location>
        <position position="222"/>
    </location>
</feature>
<feature type="glycosylation site" description="N-linked (GlcNAc...) asparagine" evidence="1">
    <location>
        <position position="279"/>
    </location>
</feature>
<feature type="glycosylation site" description="N-linked (GlcNAc...) asparagine" evidence="1">
    <location>
        <position position="310"/>
    </location>
</feature>
<feature type="glycosylation site" description="N-linked (GlcNAc...) asparagine" evidence="1">
    <location>
        <position position="343"/>
    </location>
</feature>
<feature type="glycosylation site" description="N-linked (GlcNAc...) asparagine" evidence="1">
    <location>
        <position position="450"/>
    </location>
</feature>
<feature type="glycosylation site" description="N-linked (GlcNAc...) asparagine" evidence="1">
    <location>
        <position position="465"/>
    </location>
</feature>
<feature type="glycosylation site" description="N-linked (GlcNAc...) asparagine" evidence="1">
    <location>
        <position position="527"/>
    </location>
</feature>
<feature type="glycosylation site" description="N-linked (GlcNAc...) asparagine" evidence="1">
    <location>
        <position position="576"/>
    </location>
</feature>
<feature type="glycosylation site" description="N-linked (GlcNAc...) asparagine" evidence="1">
    <location>
        <position position="682"/>
    </location>
</feature>
<feature type="glycosylation site" description="N-linked (GlcNAc...) asparagine" evidence="1">
    <location>
        <position position="723"/>
    </location>
</feature>
<feature type="glycosylation site" description="N-linked (GlcNAc...) asparagine" evidence="1">
    <location>
        <position position="732"/>
    </location>
</feature>
<proteinExistence type="evidence at protein level"/>
<organism>
    <name type="scientific">Aspergillus tubingensis</name>
    <dbReference type="NCBI Taxonomy" id="5068"/>
    <lineage>
        <taxon>Eukaryota</taxon>
        <taxon>Fungi</taxon>
        <taxon>Dikarya</taxon>
        <taxon>Ascomycota</taxon>
        <taxon>Pezizomycotina</taxon>
        <taxon>Eurotiomycetes</taxon>
        <taxon>Eurotiomycetidae</taxon>
        <taxon>Eurotiales</taxon>
        <taxon>Aspergillaceae</taxon>
        <taxon>Aspergillus</taxon>
        <taxon>Aspergillus subgen. Circumdati</taxon>
    </lineage>
</organism>
<dbReference type="EC" id="3.2.1.139"/>
<dbReference type="EMBL" id="Y15405">
    <property type="protein sequence ID" value="CAA75605.1"/>
    <property type="molecule type" value="Genomic_DNA"/>
</dbReference>
<dbReference type="SMR" id="O42814"/>
<dbReference type="CAZy" id="GH67">
    <property type="family name" value="Glycoside Hydrolase Family 67"/>
</dbReference>
<dbReference type="GlyCosmos" id="O42814">
    <property type="glycosylation" value="14 sites, No reported glycans"/>
</dbReference>
<dbReference type="VEuPathDB" id="FungiDB:ASPTUDRAFT_194940"/>
<dbReference type="GO" id="GO:0005576">
    <property type="term" value="C:extracellular region"/>
    <property type="evidence" value="ECO:0007669"/>
    <property type="project" value="UniProtKB-SubCell"/>
</dbReference>
<dbReference type="GO" id="GO:0046559">
    <property type="term" value="F:alpha-glucuronidase activity"/>
    <property type="evidence" value="ECO:0007669"/>
    <property type="project" value="UniProtKB-EC"/>
</dbReference>
<dbReference type="GO" id="GO:0045493">
    <property type="term" value="P:xylan catabolic process"/>
    <property type="evidence" value="ECO:0007669"/>
    <property type="project" value="UniProtKB-KW"/>
</dbReference>
<dbReference type="CDD" id="cd02795">
    <property type="entry name" value="CBM6-CBM35-CBM36_like"/>
    <property type="match status" value="1"/>
</dbReference>
<dbReference type="FunFam" id="3.20.20.80:FF:000096">
    <property type="entry name" value="Xylan alpha-1,2-glucuronidase"/>
    <property type="match status" value="1"/>
</dbReference>
<dbReference type="Gene3D" id="3.90.1330.10">
    <property type="entry name" value="Alpha-glucuronidase, C-terminal domain"/>
    <property type="match status" value="1"/>
</dbReference>
<dbReference type="Gene3D" id="3.30.379.10">
    <property type="entry name" value="Chitobiase/beta-hexosaminidase domain 2-like"/>
    <property type="match status" value="1"/>
</dbReference>
<dbReference type="Gene3D" id="3.20.20.80">
    <property type="entry name" value="Glycosidases"/>
    <property type="match status" value="1"/>
</dbReference>
<dbReference type="InterPro" id="IPR037054">
    <property type="entry name" value="A-glucoronidase_C_sf"/>
</dbReference>
<dbReference type="InterPro" id="IPR011395">
    <property type="entry name" value="Glyco_hydro_67_aGlcAse"/>
</dbReference>
<dbReference type="InterPro" id="IPR005154">
    <property type="entry name" value="Glyco_hydro_67_aGlcAse_N"/>
</dbReference>
<dbReference type="InterPro" id="IPR011099">
    <property type="entry name" value="Glyco_hydro_67_C"/>
</dbReference>
<dbReference type="InterPro" id="IPR011100">
    <property type="entry name" value="Glyco_hydro_67_cat"/>
</dbReference>
<dbReference type="InterPro" id="IPR017853">
    <property type="entry name" value="Glycoside_hydrolase_SF"/>
</dbReference>
<dbReference type="InterPro" id="IPR029018">
    <property type="entry name" value="Hex-like_dom2"/>
</dbReference>
<dbReference type="PANTHER" id="PTHR39207">
    <property type="entry name" value="ALPHA-GLUCURONIDASE A"/>
    <property type="match status" value="1"/>
</dbReference>
<dbReference type="PANTHER" id="PTHR39207:SF1">
    <property type="entry name" value="ALPHA-GLUCURONIDASE A"/>
    <property type="match status" value="1"/>
</dbReference>
<dbReference type="Pfam" id="PF07477">
    <property type="entry name" value="Glyco_hydro_67C"/>
    <property type="match status" value="1"/>
</dbReference>
<dbReference type="Pfam" id="PF07488">
    <property type="entry name" value="Glyco_hydro_67M"/>
    <property type="match status" value="1"/>
</dbReference>
<dbReference type="Pfam" id="PF03648">
    <property type="entry name" value="Glyco_hydro_67N"/>
    <property type="match status" value="1"/>
</dbReference>
<dbReference type="PIRSF" id="PIRSF029900">
    <property type="entry name" value="Alpha-glucuronds"/>
    <property type="match status" value="1"/>
</dbReference>
<dbReference type="SUPFAM" id="SSF51445">
    <property type="entry name" value="(Trans)glycosidases"/>
    <property type="match status" value="1"/>
</dbReference>
<dbReference type="SUPFAM" id="SSF55545">
    <property type="entry name" value="beta-N-acetylhexosaminidase-like domain"/>
    <property type="match status" value="1"/>
</dbReference>